<organism>
    <name type="scientific">Klebsiella pneumoniae subsp. pneumoniae (strain ATCC 700721 / MGH 78578)</name>
    <dbReference type="NCBI Taxonomy" id="272620"/>
    <lineage>
        <taxon>Bacteria</taxon>
        <taxon>Pseudomonadati</taxon>
        <taxon>Pseudomonadota</taxon>
        <taxon>Gammaproteobacteria</taxon>
        <taxon>Enterobacterales</taxon>
        <taxon>Enterobacteriaceae</taxon>
        <taxon>Klebsiella/Raoultella group</taxon>
        <taxon>Klebsiella</taxon>
        <taxon>Klebsiella pneumoniae complex</taxon>
    </lineage>
</organism>
<accession>A6TEI9</accession>
<evidence type="ECO:0000255" key="1">
    <source>
        <dbReference type="HAMAP-Rule" id="MF_01077"/>
    </source>
</evidence>
<evidence type="ECO:0000305" key="2"/>
<name>RIMP_KLEP7</name>
<proteinExistence type="inferred from homology"/>
<dbReference type="EMBL" id="CP000647">
    <property type="protein sequence ID" value="ABR78973.1"/>
    <property type="status" value="ALT_INIT"/>
    <property type="molecule type" value="Genomic_DNA"/>
</dbReference>
<dbReference type="RefSeq" id="WP_002918364.1">
    <property type="nucleotide sequence ID" value="NC_009648.1"/>
</dbReference>
<dbReference type="SMR" id="A6TEI9"/>
<dbReference type="STRING" id="272620.KPN_03578"/>
<dbReference type="jPOST" id="A6TEI9"/>
<dbReference type="PaxDb" id="272620-KPN_03578"/>
<dbReference type="EnsemblBacteria" id="ABR78973">
    <property type="protein sequence ID" value="ABR78973"/>
    <property type="gene ID" value="KPN_03578"/>
</dbReference>
<dbReference type="GeneID" id="93271115"/>
<dbReference type="KEGG" id="kpn:KPN_03578"/>
<dbReference type="HOGENOM" id="CLU_070525_1_1_6"/>
<dbReference type="Proteomes" id="UP000000265">
    <property type="component" value="Chromosome"/>
</dbReference>
<dbReference type="GO" id="GO:0005829">
    <property type="term" value="C:cytosol"/>
    <property type="evidence" value="ECO:0007669"/>
    <property type="project" value="TreeGrafter"/>
</dbReference>
<dbReference type="GO" id="GO:0000028">
    <property type="term" value="P:ribosomal small subunit assembly"/>
    <property type="evidence" value="ECO:0007669"/>
    <property type="project" value="TreeGrafter"/>
</dbReference>
<dbReference type="GO" id="GO:0006412">
    <property type="term" value="P:translation"/>
    <property type="evidence" value="ECO:0007669"/>
    <property type="project" value="TreeGrafter"/>
</dbReference>
<dbReference type="CDD" id="cd01734">
    <property type="entry name" value="YlxS_C"/>
    <property type="match status" value="1"/>
</dbReference>
<dbReference type="FunFam" id="2.30.30.180:FF:000001">
    <property type="entry name" value="Ribosome maturation factor RimP"/>
    <property type="match status" value="1"/>
</dbReference>
<dbReference type="FunFam" id="3.30.300.70:FF:000001">
    <property type="entry name" value="Ribosome maturation factor RimP"/>
    <property type="match status" value="1"/>
</dbReference>
<dbReference type="Gene3D" id="2.30.30.180">
    <property type="entry name" value="Ribosome maturation factor RimP, C-terminal domain"/>
    <property type="match status" value="1"/>
</dbReference>
<dbReference type="Gene3D" id="3.30.300.70">
    <property type="entry name" value="RimP-like superfamily, N-terminal"/>
    <property type="match status" value="1"/>
</dbReference>
<dbReference type="HAMAP" id="MF_01077">
    <property type="entry name" value="RimP"/>
    <property type="match status" value="1"/>
</dbReference>
<dbReference type="InterPro" id="IPR003728">
    <property type="entry name" value="Ribosome_maturation_RimP"/>
</dbReference>
<dbReference type="InterPro" id="IPR028998">
    <property type="entry name" value="RimP_C"/>
</dbReference>
<dbReference type="InterPro" id="IPR036847">
    <property type="entry name" value="RimP_C_sf"/>
</dbReference>
<dbReference type="InterPro" id="IPR028989">
    <property type="entry name" value="RimP_N"/>
</dbReference>
<dbReference type="InterPro" id="IPR035956">
    <property type="entry name" value="RimP_N_sf"/>
</dbReference>
<dbReference type="NCBIfam" id="NF000927">
    <property type="entry name" value="PRK00092.1-1"/>
    <property type="match status" value="1"/>
</dbReference>
<dbReference type="PANTHER" id="PTHR33867">
    <property type="entry name" value="RIBOSOME MATURATION FACTOR RIMP"/>
    <property type="match status" value="1"/>
</dbReference>
<dbReference type="PANTHER" id="PTHR33867:SF1">
    <property type="entry name" value="RIBOSOME MATURATION FACTOR RIMP"/>
    <property type="match status" value="1"/>
</dbReference>
<dbReference type="Pfam" id="PF17384">
    <property type="entry name" value="DUF150_C"/>
    <property type="match status" value="1"/>
</dbReference>
<dbReference type="Pfam" id="PF02576">
    <property type="entry name" value="RimP_N"/>
    <property type="match status" value="1"/>
</dbReference>
<dbReference type="SUPFAM" id="SSF74942">
    <property type="entry name" value="YhbC-like, C-terminal domain"/>
    <property type="match status" value="1"/>
</dbReference>
<dbReference type="SUPFAM" id="SSF75420">
    <property type="entry name" value="YhbC-like, N-terminal domain"/>
    <property type="match status" value="1"/>
</dbReference>
<keyword id="KW-0963">Cytoplasm</keyword>
<keyword id="KW-0690">Ribosome biogenesis</keyword>
<gene>
    <name evidence="1" type="primary">rimP</name>
    <name type="ordered locus">KPN78578_35490</name>
    <name type="ORF">KPN_03578</name>
</gene>
<comment type="function">
    <text evidence="1">Required for maturation of 30S ribosomal subunits.</text>
</comment>
<comment type="subcellular location">
    <subcellularLocation>
        <location evidence="1">Cytoplasm</location>
    </subcellularLocation>
</comment>
<comment type="similarity">
    <text evidence="1">Belongs to the RimP family.</text>
</comment>
<comment type="sequence caution" evidence="2">
    <conflict type="erroneous initiation">
        <sequence resource="EMBL-CDS" id="ABR78973"/>
    </conflict>
</comment>
<reference key="1">
    <citation type="submission" date="2006-09" db="EMBL/GenBank/DDBJ databases">
        <authorList>
            <consortium name="The Klebsiella pneumonia Genome Sequencing Project"/>
            <person name="McClelland M."/>
            <person name="Sanderson E.K."/>
            <person name="Spieth J."/>
            <person name="Clifton W.S."/>
            <person name="Latreille P."/>
            <person name="Sabo A."/>
            <person name="Pepin K."/>
            <person name="Bhonagiri V."/>
            <person name="Porwollik S."/>
            <person name="Ali J."/>
            <person name="Wilson R.K."/>
        </authorList>
    </citation>
    <scope>NUCLEOTIDE SEQUENCE [LARGE SCALE GENOMIC DNA]</scope>
    <source>
        <strain>ATCC 700721 / MGH 78578</strain>
    </source>
</reference>
<sequence>MSTLEQKLTEMLTAPVEALGFELVGIEFIRGRTSTLRIYIDSEDGINVDDCADVSHQVSAVMDVEDPITVAYNLEVSSPGLDRPMFTAEHYQRFTGEEVALVLRMAVQNRRKWQGIIKAVDGEMITVTVEGKDEVFALSNIQKANLVPHF</sequence>
<protein>
    <recommendedName>
        <fullName evidence="1">Ribosome maturation factor RimP</fullName>
    </recommendedName>
</protein>
<feature type="chain" id="PRO_0000384688" description="Ribosome maturation factor RimP">
    <location>
        <begin position="1"/>
        <end position="150"/>
    </location>
</feature>